<comment type="function">
    <text>Inhibitor of the caspase-activated DNase (DFF40).</text>
</comment>
<comment type="subunit">
    <text evidence="3">Heterodimer of DFFA and DFFB.</text>
</comment>
<comment type="interaction">
    <interactant intactId="EBI-727171">
        <id>O00273</id>
    </interactant>
    <interactant intactId="EBI-1053821">
        <id>O76075</id>
        <label>DFFB</label>
    </interactant>
    <organismsDiffer>false</organismsDiffer>
    <experiments>8</experiments>
</comment>
<comment type="interaction">
    <interactant intactId="EBI-727171">
        <id>O00273</id>
    </interactant>
    <interactant intactId="EBI-352682">
        <id>P04792</id>
        <label>HSPB1</label>
    </interactant>
    <organismsDiffer>false</organismsDiffer>
    <experiments>2</experiments>
</comment>
<comment type="interaction">
    <interactant intactId="EBI-727171">
        <id>O00273</id>
    </interactant>
    <interactant intactId="EBI-308511">
        <id>Q9UJ04</id>
        <label>TSPYL4</label>
    </interactant>
    <organismsDiffer>false</organismsDiffer>
    <experiments>2</experiments>
</comment>
<comment type="interaction">
    <interactant intactId="EBI-727171">
        <id>O00273</id>
    </interactant>
    <interactant intactId="EBI-7365197">
        <id>O54788</id>
        <label>Dffb</label>
    </interactant>
    <organismsDiffer>true</organismsDiffer>
    <experiments>8</experiments>
</comment>
<comment type="subcellular location">
    <subcellularLocation>
        <location>Cytoplasm</location>
    </subcellularLocation>
</comment>
<comment type="alternative products">
    <event type="alternative splicing"/>
    <isoform>
        <id>O00273-1</id>
        <name>DFF45</name>
        <sequence type="displayed"/>
    </isoform>
    <isoform>
        <id>O00273-2</id>
        <name>DFF35</name>
        <sequence type="described" ref="VSP_001085 VSP_001086"/>
    </isoform>
</comment>
<comment type="PTM">
    <text>Caspase-3 cleaves DFF45 at 2 sites to generate an active factor.</text>
</comment>
<accession>O00273</accession>
<accession>Q5T6G5</accession>
<accession>Q5T6G6</accession>
<accession>Q96I97</accession>
<accession>Q9Y6C6</accession>
<protein>
    <recommendedName>
        <fullName>DNA fragmentation factor subunit alpha</fullName>
    </recommendedName>
    <alternativeName>
        <fullName>DNA fragmentation factor 45 kDa subunit</fullName>
        <shortName>DFF-45</shortName>
    </alternativeName>
    <alternativeName>
        <fullName>Inhibitor of CAD</fullName>
        <shortName>ICAD</shortName>
    </alternativeName>
</protein>
<keyword id="KW-0002">3D-structure</keyword>
<keyword id="KW-0007">Acetylation</keyword>
<keyword id="KW-0025">Alternative splicing</keyword>
<keyword id="KW-0053">Apoptosis</keyword>
<keyword id="KW-0963">Cytoplasm</keyword>
<keyword id="KW-0903">Direct protein sequencing</keyword>
<keyword id="KW-0597">Phosphoprotein</keyword>
<keyword id="KW-1267">Proteomics identification</keyword>
<keyword id="KW-1185">Reference proteome</keyword>
<dbReference type="EMBL" id="U91985">
    <property type="protein sequence ID" value="AAC51249.1"/>
    <property type="molecule type" value="mRNA"/>
</dbReference>
<dbReference type="EMBL" id="AF087573">
    <property type="protein sequence ID" value="AAD32953.1"/>
    <property type="molecule type" value="mRNA"/>
</dbReference>
<dbReference type="EMBL" id="AF103799">
    <property type="protein sequence ID" value="AAF02419.1"/>
    <property type="molecule type" value="mRNA"/>
</dbReference>
<dbReference type="EMBL" id="BT006980">
    <property type="protein sequence ID" value="AAP35626.1"/>
    <property type="molecule type" value="mRNA"/>
</dbReference>
<dbReference type="EMBL" id="AK313317">
    <property type="protein sequence ID" value="BAG36122.1"/>
    <property type="molecule type" value="mRNA"/>
</dbReference>
<dbReference type="EMBL" id="AL354956">
    <property type="status" value="NOT_ANNOTATED_CDS"/>
    <property type="molecule type" value="Genomic_DNA"/>
</dbReference>
<dbReference type="EMBL" id="CH471130">
    <property type="protein sequence ID" value="EAW71656.1"/>
    <property type="molecule type" value="Genomic_DNA"/>
</dbReference>
<dbReference type="EMBL" id="CH471130">
    <property type="protein sequence ID" value="EAW71657.1"/>
    <property type="molecule type" value="Genomic_DNA"/>
</dbReference>
<dbReference type="EMBL" id="BC000037">
    <property type="protein sequence ID" value="AAH00037.1"/>
    <property type="molecule type" value="mRNA"/>
</dbReference>
<dbReference type="EMBL" id="BC007112">
    <property type="protein sequence ID" value="AAH07112.1"/>
    <property type="molecule type" value="mRNA"/>
</dbReference>
<dbReference type="EMBL" id="BC007721">
    <property type="protein sequence ID" value="AAH07721.1"/>
    <property type="molecule type" value="mRNA"/>
</dbReference>
<dbReference type="CCDS" id="CCDS118.1">
    <molecule id="O00273-1"/>
</dbReference>
<dbReference type="CCDS" id="CCDS119.1">
    <molecule id="O00273-2"/>
</dbReference>
<dbReference type="RefSeq" id="NP_004392.1">
    <molecule id="O00273-1"/>
    <property type="nucleotide sequence ID" value="NM_004401.3"/>
</dbReference>
<dbReference type="RefSeq" id="NP_998731.1">
    <molecule id="O00273-2"/>
    <property type="nucleotide sequence ID" value="NM_213566.2"/>
</dbReference>
<dbReference type="PDB" id="1IBX">
    <property type="method" value="NMR"/>
    <property type="chains" value="B=11-100"/>
</dbReference>
<dbReference type="PDB" id="1IYR">
    <property type="method" value="NMR"/>
    <property type="chains" value="A=225-331"/>
</dbReference>
<dbReference type="PDB" id="1KOY">
    <property type="method" value="NMR"/>
    <property type="chains" value="A=239-300"/>
</dbReference>
<dbReference type="PDBsum" id="1IBX"/>
<dbReference type="PDBsum" id="1IYR"/>
<dbReference type="PDBsum" id="1KOY"/>
<dbReference type="BMRB" id="O00273"/>
<dbReference type="SMR" id="O00273"/>
<dbReference type="BioGRID" id="108040">
    <property type="interactions" value="69"/>
</dbReference>
<dbReference type="ComplexPortal" id="CPX-2498">
    <property type="entry name" value="DNA fragmentation factor complex"/>
</dbReference>
<dbReference type="FunCoup" id="O00273">
    <property type="interactions" value="2730"/>
</dbReference>
<dbReference type="IntAct" id="O00273">
    <property type="interactions" value="17"/>
</dbReference>
<dbReference type="MINT" id="O00273"/>
<dbReference type="STRING" id="9606.ENSP00000366237"/>
<dbReference type="GlyGen" id="O00273">
    <property type="glycosylation" value="1 site, 1 O-linked glycan (1 site)"/>
</dbReference>
<dbReference type="iPTMnet" id="O00273"/>
<dbReference type="PhosphoSitePlus" id="O00273"/>
<dbReference type="BioMuta" id="DFFA"/>
<dbReference type="jPOST" id="O00273"/>
<dbReference type="MassIVE" id="O00273"/>
<dbReference type="PaxDb" id="9606-ENSP00000366237"/>
<dbReference type="PeptideAtlas" id="O00273"/>
<dbReference type="ProteomicsDB" id="47820">
    <molecule id="O00273-1"/>
</dbReference>
<dbReference type="ProteomicsDB" id="47821">
    <molecule id="O00273-2"/>
</dbReference>
<dbReference type="Pumba" id="O00273"/>
<dbReference type="Antibodypedia" id="3633">
    <property type="antibodies" value="856 antibodies from 46 providers"/>
</dbReference>
<dbReference type="DNASU" id="1676"/>
<dbReference type="Ensembl" id="ENST00000377036.2">
    <molecule id="O00273-2"/>
    <property type="protein sequence ID" value="ENSP00000366235.2"/>
    <property type="gene ID" value="ENSG00000160049.12"/>
</dbReference>
<dbReference type="Ensembl" id="ENST00000377038.8">
    <molecule id="O00273-1"/>
    <property type="protein sequence ID" value="ENSP00000366237.3"/>
    <property type="gene ID" value="ENSG00000160049.12"/>
</dbReference>
<dbReference type="GeneID" id="1676"/>
<dbReference type="KEGG" id="hsa:1676"/>
<dbReference type="MANE-Select" id="ENST00000377038.8">
    <property type="protein sequence ID" value="ENSP00000366237.3"/>
    <property type="RefSeq nucleotide sequence ID" value="NM_004401.3"/>
    <property type="RefSeq protein sequence ID" value="NP_004392.1"/>
</dbReference>
<dbReference type="UCSC" id="uc001arj.4">
    <molecule id="O00273-1"/>
    <property type="organism name" value="human"/>
</dbReference>
<dbReference type="AGR" id="HGNC:2772"/>
<dbReference type="CTD" id="1676"/>
<dbReference type="DisGeNET" id="1676"/>
<dbReference type="GeneCards" id="DFFA"/>
<dbReference type="HGNC" id="HGNC:2772">
    <property type="gene designation" value="DFFA"/>
</dbReference>
<dbReference type="HPA" id="ENSG00000160049">
    <property type="expression patterns" value="Low tissue specificity"/>
</dbReference>
<dbReference type="MIM" id="601882">
    <property type="type" value="gene"/>
</dbReference>
<dbReference type="neXtProt" id="NX_O00273"/>
<dbReference type="OpenTargets" id="ENSG00000160049"/>
<dbReference type="PharmGKB" id="PA27254"/>
<dbReference type="VEuPathDB" id="HostDB:ENSG00000160049"/>
<dbReference type="eggNOG" id="ENOG502RQ19">
    <property type="taxonomic scope" value="Eukaryota"/>
</dbReference>
<dbReference type="GeneTree" id="ENSGT00390000018596"/>
<dbReference type="HOGENOM" id="CLU_086234_0_0_1"/>
<dbReference type="InParanoid" id="O00273"/>
<dbReference type="OMA" id="NWDIRKT"/>
<dbReference type="OrthoDB" id="6475906at2759"/>
<dbReference type="PAN-GO" id="O00273">
    <property type="GO annotations" value="1 GO annotation based on evolutionary models"/>
</dbReference>
<dbReference type="PhylomeDB" id="O00273"/>
<dbReference type="TreeFam" id="TF102021"/>
<dbReference type="PathwayCommons" id="O00273"/>
<dbReference type="Reactome" id="R-HSA-140342">
    <property type="pathway name" value="Apoptosis induced DNA fragmentation"/>
</dbReference>
<dbReference type="SignaLink" id="O00273"/>
<dbReference type="SIGNOR" id="O00273"/>
<dbReference type="BioGRID-ORCS" id="1676">
    <property type="hits" value="15 hits in 1162 CRISPR screens"/>
</dbReference>
<dbReference type="ChiTaRS" id="DFFA">
    <property type="organism name" value="human"/>
</dbReference>
<dbReference type="EvolutionaryTrace" id="O00273"/>
<dbReference type="GeneWiki" id="DFFA"/>
<dbReference type="GenomeRNAi" id="1676"/>
<dbReference type="Pharos" id="O00273">
    <property type="development level" value="Tbio"/>
</dbReference>
<dbReference type="PRO" id="PR:O00273"/>
<dbReference type="Proteomes" id="UP000005640">
    <property type="component" value="Chromosome 1"/>
</dbReference>
<dbReference type="RNAct" id="O00273">
    <property type="molecule type" value="protein"/>
</dbReference>
<dbReference type="Bgee" id="ENSG00000160049">
    <property type="expression patterns" value="Expressed in medial globus pallidus and 206 other cell types or tissues"/>
</dbReference>
<dbReference type="ExpressionAtlas" id="O00273">
    <property type="expression patterns" value="baseline and differential"/>
</dbReference>
<dbReference type="GO" id="GO:0000785">
    <property type="term" value="C:chromatin"/>
    <property type="evidence" value="ECO:0000314"/>
    <property type="project" value="UniProtKB"/>
</dbReference>
<dbReference type="GO" id="GO:0005829">
    <property type="term" value="C:cytosol"/>
    <property type="evidence" value="ECO:0000314"/>
    <property type="project" value="HPA"/>
</dbReference>
<dbReference type="GO" id="GO:0005654">
    <property type="term" value="C:nucleoplasm"/>
    <property type="evidence" value="ECO:0000304"/>
    <property type="project" value="Reactome"/>
</dbReference>
<dbReference type="GO" id="GO:0005634">
    <property type="term" value="C:nucleus"/>
    <property type="evidence" value="ECO:0000314"/>
    <property type="project" value="MGI"/>
</dbReference>
<dbReference type="GO" id="GO:0005886">
    <property type="term" value="C:plasma membrane"/>
    <property type="evidence" value="ECO:0000314"/>
    <property type="project" value="HPA"/>
</dbReference>
<dbReference type="GO" id="GO:0032991">
    <property type="term" value="C:protein-containing complex"/>
    <property type="evidence" value="ECO:0000314"/>
    <property type="project" value="CAFA"/>
</dbReference>
<dbReference type="GO" id="GO:0060703">
    <property type="term" value="F:deoxyribonuclease inhibitor activity"/>
    <property type="evidence" value="ECO:0000315"/>
    <property type="project" value="CAFA"/>
</dbReference>
<dbReference type="GO" id="GO:0019904">
    <property type="term" value="F:protein domain specific binding"/>
    <property type="evidence" value="ECO:0000353"/>
    <property type="project" value="CAFA"/>
</dbReference>
<dbReference type="GO" id="GO:0044183">
    <property type="term" value="F:protein folding chaperone"/>
    <property type="evidence" value="ECO:0000353"/>
    <property type="project" value="CAFA"/>
</dbReference>
<dbReference type="GO" id="GO:0006309">
    <property type="term" value="P:apoptotic DNA fragmentation"/>
    <property type="evidence" value="ECO:0007669"/>
    <property type="project" value="InterPro"/>
</dbReference>
<dbReference type="GO" id="GO:0061077">
    <property type="term" value="P:chaperone-mediated protein folding"/>
    <property type="evidence" value="ECO:0000315"/>
    <property type="project" value="CAFA"/>
</dbReference>
<dbReference type="GO" id="GO:1902511">
    <property type="term" value="P:negative regulation of apoptotic DNA fragmentation"/>
    <property type="evidence" value="ECO:0000314"/>
    <property type="project" value="MGI"/>
</dbReference>
<dbReference type="GO" id="GO:0032076">
    <property type="term" value="P:negative regulation of deoxyribonuclease activity"/>
    <property type="evidence" value="ECO:0000315"/>
    <property type="project" value="CAFA"/>
</dbReference>
<dbReference type="GO" id="GO:1900118">
    <property type="term" value="P:negative regulation of execution phase of apoptosis"/>
    <property type="evidence" value="ECO:0000314"/>
    <property type="project" value="BHF-UCL"/>
</dbReference>
<dbReference type="GO" id="GO:0043065">
    <property type="term" value="P:positive regulation of apoptotic process"/>
    <property type="evidence" value="ECO:0007669"/>
    <property type="project" value="Ensembl"/>
</dbReference>
<dbReference type="GO" id="GO:0070242">
    <property type="term" value="P:thymocyte apoptotic process"/>
    <property type="evidence" value="ECO:0007669"/>
    <property type="project" value="Ensembl"/>
</dbReference>
<dbReference type="DisProt" id="DP00173"/>
<dbReference type="FunFam" id="1.10.1490.10:FF:000001">
    <property type="entry name" value="DNA fragmentation factor subunit alpha"/>
    <property type="match status" value="1"/>
</dbReference>
<dbReference type="FunFam" id="1.10.1490.10:FF:000002">
    <property type="entry name" value="DNA fragmentation factor subunit alpha"/>
    <property type="match status" value="1"/>
</dbReference>
<dbReference type="FunFam" id="3.10.20.10:FF:000007">
    <property type="entry name" value="DNA fragmentation factor subunit alpha"/>
    <property type="match status" value="1"/>
</dbReference>
<dbReference type="Gene3D" id="3.10.20.10">
    <property type="match status" value="1"/>
</dbReference>
<dbReference type="Gene3D" id="1.10.1490.10">
    <property type="entry name" value="C-terminal domain of DFF45/ICAD (DFF-C domain)"/>
    <property type="match status" value="2"/>
</dbReference>
<dbReference type="InterPro" id="IPR003508">
    <property type="entry name" value="CIDE-N_dom"/>
</dbReference>
<dbReference type="InterPro" id="IPR027296">
    <property type="entry name" value="DFF-C"/>
</dbReference>
<dbReference type="InterPro" id="IPR017299">
    <property type="entry name" value="DFF45"/>
</dbReference>
<dbReference type="InterPro" id="IPR015121">
    <property type="entry name" value="DNA_fragmentation_mid_dom"/>
</dbReference>
<dbReference type="PANTHER" id="PTHR12306">
    <property type="entry name" value="CELL DEATH ACTIVATOR CIDE"/>
    <property type="match status" value="1"/>
</dbReference>
<dbReference type="PANTHER" id="PTHR12306:SF16">
    <property type="entry name" value="DNAATION FACTOR SUBUNIT ALPHA"/>
    <property type="match status" value="1"/>
</dbReference>
<dbReference type="Pfam" id="PF02017">
    <property type="entry name" value="CIDE-N"/>
    <property type="match status" value="1"/>
</dbReference>
<dbReference type="Pfam" id="PF09033">
    <property type="entry name" value="DFF-C"/>
    <property type="match status" value="1"/>
</dbReference>
<dbReference type="PIRSF" id="PIRSF037865">
    <property type="entry name" value="DFF_alpha"/>
    <property type="match status" value="1"/>
</dbReference>
<dbReference type="SMART" id="SM00266">
    <property type="entry name" value="CAD"/>
    <property type="match status" value="1"/>
</dbReference>
<dbReference type="SUPFAM" id="SSF81783">
    <property type="entry name" value="C-terminal domain of DFF45/ICAD (DFF-C domain)"/>
    <property type="match status" value="1"/>
</dbReference>
<dbReference type="SUPFAM" id="SSF54277">
    <property type="entry name" value="CAD &amp; PB1 domains"/>
    <property type="match status" value="1"/>
</dbReference>
<dbReference type="PROSITE" id="PS51135">
    <property type="entry name" value="CIDE_N"/>
    <property type="match status" value="1"/>
</dbReference>
<gene>
    <name type="primary">DFFA</name>
    <name type="synonym">DFF1</name>
    <name type="synonym">DFF45</name>
    <name type="ORF">H13</name>
</gene>
<sequence>MEVTGDAGVPESGEIRTLKPCLLRRNYSREQHGVAASCLEDLRSKACDILAIDKSLTPVTLVLAEDGTIVDDDDYFLCLPSNTKFVALASNEKWAYNNSDGGTAWISQESFDVDETDSGAGLKWKNVARQLKEDLSSIILLSEEDLQMLVDAPCSDLAQELRQSCATVQRLQHTLQQVLDQREEVRQSKQLLQLYLQALEKEGSLLSKQEESKAAFGEEVDAVDTGISRETSSDVALASHILTALREKQAPELSLSSQDLELVTKEDPKALAVALNWDIKKTETVQEACERELALRLQQTQSLHSLRSISASKASPPGDLQNPKRARQDPT</sequence>
<feature type="chain" id="PRO_0000144716" description="DNA fragmentation factor subunit alpha">
    <location>
        <begin position="1"/>
        <end position="331"/>
    </location>
</feature>
<feature type="domain" description="CIDE-N" evidence="1">
    <location>
        <begin position="17"/>
        <end position="96"/>
    </location>
</feature>
<feature type="region of interest" description="Disordered" evidence="2">
    <location>
        <begin position="305"/>
        <end position="331"/>
    </location>
</feature>
<feature type="site" description="Cleavage; by caspase-3">
    <location>
        <begin position="117"/>
        <end position="118"/>
    </location>
</feature>
<feature type="site" description="Cleavage; by caspase-3">
    <location>
        <begin position="224"/>
        <end position="225"/>
    </location>
</feature>
<feature type="modified residue" description="N-acetylmethionine" evidence="4 10 13 14">
    <location>
        <position position="1"/>
    </location>
</feature>
<feature type="modified residue" description="Phosphothreonine" evidence="15">
    <location>
        <position position="243"/>
    </location>
</feature>
<feature type="modified residue" description="Phosphoserine" evidence="8 9 11 12 15 16">
    <location>
        <position position="315"/>
    </location>
</feature>
<feature type="splice variant" id="VSP_001085" description="In isoform DFF35." evidence="5 6">
    <original>LVTKEDP</original>
    <variation>VGGNQGH</variation>
    <location>
        <begin position="262"/>
        <end position="268"/>
    </location>
</feature>
<feature type="splice variant" id="VSP_001086" description="In isoform DFF35." evidence="5 6">
    <location>
        <begin position="269"/>
        <end position="331"/>
    </location>
</feature>
<feature type="sequence conflict" description="In Ref. 8; AAH07721." evidence="7" ref="8">
    <original>R</original>
    <variation>W</variation>
    <location>
        <position position="291"/>
    </location>
</feature>
<feature type="helix" evidence="17">
    <location>
        <begin position="39"/>
        <end position="50"/>
    </location>
</feature>
<feature type="strand" evidence="17">
    <location>
        <begin position="60"/>
        <end position="63"/>
    </location>
</feature>
<feature type="turn" evidence="17">
    <location>
        <begin position="64"/>
        <end position="66"/>
    </location>
</feature>
<feature type="helix" evidence="17">
    <location>
        <begin position="73"/>
        <end position="78"/>
    </location>
</feature>
<feature type="strand" evidence="17">
    <location>
        <begin position="84"/>
        <end position="88"/>
    </location>
</feature>
<feature type="helix" evidence="18">
    <location>
        <begin position="239"/>
        <end position="246"/>
    </location>
</feature>
<feature type="turn" evidence="18">
    <location>
        <begin position="251"/>
        <end position="254"/>
    </location>
</feature>
<feature type="helix" evidence="18">
    <location>
        <begin position="257"/>
        <end position="264"/>
    </location>
</feature>
<feature type="helix" evidence="18">
    <location>
        <begin position="268"/>
        <end position="274"/>
    </location>
</feature>
<feature type="helix" evidence="18">
    <location>
        <begin position="279"/>
        <end position="297"/>
    </location>
</feature>
<feature type="helix" evidence="18">
    <location>
        <begin position="298"/>
        <end position="300"/>
    </location>
</feature>
<proteinExistence type="evidence at protein level"/>
<evidence type="ECO:0000255" key="1">
    <source>
        <dbReference type="PROSITE-ProRule" id="PRU00447"/>
    </source>
</evidence>
<evidence type="ECO:0000256" key="2">
    <source>
        <dbReference type="SAM" id="MobiDB-lite"/>
    </source>
</evidence>
<evidence type="ECO:0000269" key="3">
    <source>
    </source>
</evidence>
<evidence type="ECO:0000269" key="4">
    <source ref="9"/>
</evidence>
<evidence type="ECO:0000303" key="5">
    <source>
    </source>
</evidence>
<evidence type="ECO:0000303" key="6">
    <source>
    </source>
</evidence>
<evidence type="ECO:0000305" key="7"/>
<evidence type="ECO:0007744" key="8">
    <source>
    </source>
</evidence>
<evidence type="ECO:0007744" key="9">
    <source>
    </source>
</evidence>
<evidence type="ECO:0007744" key="10">
    <source>
    </source>
</evidence>
<evidence type="ECO:0007744" key="11">
    <source>
    </source>
</evidence>
<evidence type="ECO:0007744" key="12">
    <source>
    </source>
</evidence>
<evidence type="ECO:0007744" key="13">
    <source>
    </source>
</evidence>
<evidence type="ECO:0007744" key="14">
    <source>
    </source>
</evidence>
<evidence type="ECO:0007744" key="15">
    <source>
    </source>
</evidence>
<evidence type="ECO:0007744" key="16">
    <source>
    </source>
</evidence>
<evidence type="ECO:0007829" key="17">
    <source>
        <dbReference type="PDB" id="1IBX"/>
    </source>
</evidence>
<evidence type="ECO:0007829" key="18">
    <source>
        <dbReference type="PDB" id="1IYR"/>
    </source>
</evidence>
<reference key="1">
    <citation type="journal article" date="1997" name="Cell">
        <title>DFF, a heterodimeric protein that functions downstream of caspase-3 to trigger DNA fragmentation during apoptosis.</title>
        <authorList>
            <person name="Liu X."/>
            <person name="Zou H."/>
            <person name="Slaughter C."/>
            <person name="Wang X."/>
        </authorList>
    </citation>
    <scope>NUCLEOTIDE SEQUENCE [MRNA] (ISOFORM DFF45)</scope>
    <scope>PROTEIN SEQUENCE OF 171-181; 190-201; 214-218 AND 230-242</scope>
</reference>
<reference key="2">
    <citation type="journal article" date="1999" name="J. Biol. Chem.">
        <title>Functional interaction of DFF35 and DFF45 with caspase-activated DNA fragmentation nuclease DFF40.</title>
        <authorList>
            <person name="Gu J.J."/>
            <person name="Dong R.P."/>
            <person name="Zhang C."/>
            <person name="McLaughlin D.F."/>
            <person name="Wu M.X."/>
            <person name="Schlossman S.F."/>
        </authorList>
    </citation>
    <scope>NUCLEOTIDE SEQUENCE [MRNA] (ISOFORM DFF35)</scope>
</reference>
<reference key="3">
    <citation type="journal article" date="1999" name="Nucleic Acids Res.">
        <title>Identification of differentially expressed genes associated with HER-2/neu overexpression in human breast cancer cells.</title>
        <authorList>
            <person name="Oh J.J."/>
            <person name="Grosshans D.R."/>
            <person name="Wong S.G."/>
            <person name="Slamon D.J."/>
        </authorList>
    </citation>
    <scope>NUCLEOTIDE SEQUENCE [MRNA] (ISOFORM DFF35)</scope>
</reference>
<reference key="4">
    <citation type="submission" date="2003-05" db="EMBL/GenBank/DDBJ databases">
        <title>Cloning of human full-length CDSs in BD Creator(TM) system donor vector.</title>
        <authorList>
            <person name="Kalnine N."/>
            <person name="Chen X."/>
            <person name="Rolfs A."/>
            <person name="Halleck A."/>
            <person name="Hines L."/>
            <person name="Eisenstein S."/>
            <person name="Koundinya M."/>
            <person name="Raphael J."/>
            <person name="Moreira D."/>
            <person name="Kelley T."/>
            <person name="LaBaer J."/>
            <person name="Lin Y."/>
            <person name="Phelan M."/>
            <person name="Farmer A."/>
        </authorList>
    </citation>
    <scope>NUCLEOTIDE SEQUENCE [LARGE SCALE MRNA] (ISOFORM DFF45)</scope>
</reference>
<reference key="5">
    <citation type="journal article" date="2004" name="Nat. Genet.">
        <title>Complete sequencing and characterization of 21,243 full-length human cDNAs.</title>
        <authorList>
            <person name="Ota T."/>
            <person name="Suzuki Y."/>
            <person name="Nishikawa T."/>
            <person name="Otsuki T."/>
            <person name="Sugiyama T."/>
            <person name="Irie R."/>
            <person name="Wakamatsu A."/>
            <person name="Hayashi K."/>
            <person name="Sato H."/>
            <person name="Nagai K."/>
            <person name="Kimura K."/>
            <person name="Makita H."/>
            <person name="Sekine M."/>
            <person name="Obayashi M."/>
            <person name="Nishi T."/>
            <person name="Shibahara T."/>
            <person name="Tanaka T."/>
            <person name="Ishii S."/>
            <person name="Yamamoto J."/>
            <person name="Saito K."/>
            <person name="Kawai Y."/>
            <person name="Isono Y."/>
            <person name="Nakamura Y."/>
            <person name="Nagahari K."/>
            <person name="Murakami K."/>
            <person name="Yasuda T."/>
            <person name="Iwayanagi T."/>
            <person name="Wagatsuma M."/>
            <person name="Shiratori A."/>
            <person name="Sudo H."/>
            <person name="Hosoiri T."/>
            <person name="Kaku Y."/>
            <person name="Kodaira H."/>
            <person name="Kondo H."/>
            <person name="Sugawara M."/>
            <person name="Takahashi M."/>
            <person name="Kanda K."/>
            <person name="Yokoi T."/>
            <person name="Furuya T."/>
            <person name="Kikkawa E."/>
            <person name="Omura Y."/>
            <person name="Abe K."/>
            <person name="Kamihara K."/>
            <person name="Katsuta N."/>
            <person name="Sato K."/>
            <person name="Tanikawa M."/>
            <person name="Yamazaki M."/>
            <person name="Ninomiya K."/>
            <person name="Ishibashi T."/>
            <person name="Yamashita H."/>
            <person name="Murakawa K."/>
            <person name="Fujimori K."/>
            <person name="Tanai H."/>
            <person name="Kimata M."/>
            <person name="Watanabe M."/>
            <person name="Hiraoka S."/>
            <person name="Chiba Y."/>
            <person name="Ishida S."/>
            <person name="Ono Y."/>
            <person name="Takiguchi S."/>
            <person name="Watanabe S."/>
            <person name="Yosida M."/>
            <person name="Hotuta T."/>
            <person name="Kusano J."/>
            <person name="Kanehori K."/>
            <person name="Takahashi-Fujii A."/>
            <person name="Hara H."/>
            <person name="Tanase T.-O."/>
            <person name="Nomura Y."/>
            <person name="Togiya S."/>
            <person name="Komai F."/>
            <person name="Hara R."/>
            <person name="Takeuchi K."/>
            <person name="Arita M."/>
            <person name="Imose N."/>
            <person name="Musashino K."/>
            <person name="Yuuki H."/>
            <person name="Oshima A."/>
            <person name="Sasaki N."/>
            <person name="Aotsuka S."/>
            <person name="Yoshikawa Y."/>
            <person name="Matsunawa H."/>
            <person name="Ichihara T."/>
            <person name="Shiohata N."/>
            <person name="Sano S."/>
            <person name="Moriya S."/>
            <person name="Momiyama H."/>
            <person name="Satoh N."/>
            <person name="Takami S."/>
            <person name="Terashima Y."/>
            <person name="Suzuki O."/>
            <person name="Nakagawa S."/>
            <person name="Senoh A."/>
            <person name="Mizoguchi H."/>
            <person name="Goto Y."/>
            <person name="Shimizu F."/>
            <person name="Wakebe H."/>
            <person name="Hishigaki H."/>
            <person name="Watanabe T."/>
            <person name="Sugiyama A."/>
            <person name="Takemoto M."/>
            <person name="Kawakami B."/>
            <person name="Yamazaki M."/>
            <person name="Watanabe K."/>
            <person name="Kumagai A."/>
            <person name="Itakura S."/>
            <person name="Fukuzumi Y."/>
            <person name="Fujimori Y."/>
            <person name="Komiyama M."/>
            <person name="Tashiro H."/>
            <person name="Tanigami A."/>
            <person name="Fujiwara T."/>
            <person name="Ono T."/>
            <person name="Yamada K."/>
            <person name="Fujii Y."/>
            <person name="Ozaki K."/>
            <person name="Hirao M."/>
            <person name="Ohmori Y."/>
            <person name="Kawabata A."/>
            <person name="Hikiji T."/>
            <person name="Kobatake N."/>
            <person name="Inagaki H."/>
            <person name="Ikema Y."/>
            <person name="Okamoto S."/>
            <person name="Okitani R."/>
            <person name="Kawakami T."/>
            <person name="Noguchi S."/>
            <person name="Itoh T."/>
            <person name="Shigeta K."/>
            <person name="Senba T."/>
            <person name="Matsumura K."/>
            <person name="Nakajima Y."/>
            <person name="Mizuno T."/>
            <person name="Morinaga M."/>
            <person name="Sasaki M."/>
            <person name="Togashi T."/>
            <person name="Oyama M."/>
            <person name="Hata H."/>
            <person name="Watanabe M."/>
            <person name="Komatsu T."/>
            <person name="Mizushima-Sugano J."/>
            <person name="Satoh T."/>
            <person name="Shirai Y."/>
            <person name="Takahashi Y."/>
            <person name="Nakagawa K."/>
            <person name="Okumura K."/>
            <person name="Nagase T."/>
            <person name="Nomura N."/>
            <person name="Kikuchi H."/>
            <person name="Masuho Y."/>
            <person name="Yamashita R."/>
            <person name="Nakai K."/>
            <person name="Yada T."/>
            <person name="Nakamura Y."/>
            <person name="Ohara O."/>
            <person name="Isogai T."/>
            <person name="Sugano S."/>
        </authorList>
    </citation>
    <scope>NUCLEOTIDE SEQUENCE [LARGE SCALE MRNA] (ISOFORM DFF45)</scope>
    <source>
        <tissue>Mammary gland</tissue>
    </source>
</reference>
<reference key="6">
    <citation type="journal article" date="2006" name="Nature">
        <title>The DNA sequence and biological annotation of human chromosome 1.</title>
        <authorList>
            <person name="Gregory S.G."/>
            <person name="Barlow K.F."/>
            <person name="McLay K.E."/>
            <person name="Kaul R."/>
            <person name="Swarbreck D."/>
            <person name="Dunham A."/>
            <person name="Scott C.E."/>
            <person name="Howe K.L."/>
            <person name="Woodfine K."/>
            <person name="Spencer C.C.A."/>
            <person name="Jones M.C."/>
            <person name="Gillson C."/>
            <person name="Searle S."/>
            <person name="Zhou Y."/>
            <person name="Kokocinski F."/>
            <person name="McDonald L."/>
            <person name="Evans R."/>
            <person name="Phillips K."/>
            <person name="Atkinson A."/>
            <person name="Cooper R."/>
            <person name="Jones C."/>
            <person name="Hall R.E."/>
            <person name="Andrews T.D."/>
            <person name="Lloyd C."/>
            <person name="Ainscough R."/>
            <person name="Almeida J.P."/>
            <person name="Ambrose K.D."/>
            <person name="Anderson F."/>
            <person name="Andrew R.W."/>
            <person name="Ashwell R.I.S."/>
            <person name="Aubin K."/>
            <person name="Babbage A.K."/>
            <person name="Bagguley C.L."/>
            <person name="Bailey J."/>
            <person name="Beasley H."/>
            <person name="Bethel G."/>
            <person name="Bird C.P."/>
            <person name="Bray-Allen S."/>
            <person name="Brown J.Y."/>
            <person name="Brown A.J."/>
            <person name="Buckley D."/>
            <person name="Burton J."/>
            <person name="Bye J."/>
            <person name="Carder C."/>
            <person name="Chapman J.C."/>
            <person name="Clark S.Y."/>
            <person name="Clarke G."/>
            <person name="Clee C."/>
            <person name="Cobley V."/>
            <person name="Collier R.E."/>
            <person name="Corby N."/>
            <person name="Coville G.J."/>
            <person name="Davies J."/>
            <person name="Deadman R."/>
            <person name="Dunn M."/>
            <person name="Earthrowl M."/>
            <person name="Ellington A.G."/>
            <person name="Errington H."/>
            <person name="Frankish A."/>
            <person name="Frankland J."/>
            <person name="French L."/>
            <person name="Garner P."/>
            <person name="Garnett J."/>
            <person name="Gay L."/>
            <person name="Ghori M.R.J."/>
            <person name="Gibson R."/>
            <person name="Gilby L.M."/>
            <person name="Gillett W."/>
            <person name="Glithero R.J."/>
            <person name="Grafham D.V."/>
            <person name="Griffiths C."/>
            <person name="Griffiths-Jones S."/>
            <person name="Grocock R."/>
            <person name="Hammond S."/>
            <person name="Harrison E.S.I."/>
            <person name="Hart E."/>
            <person name="Haugen E."/>
            <person name="Heath P.D."/>
            <person name="Holmes S."/>
            <person name="Holt K."/>
            <person name="Howden P.J."/>
            <person name="Hunt A.R."/>
            <person name="Hunt S.E."/>
            <person name="Hunter G."/>
            <person name="Isherwood J."/>
            <person name="James R."/>
            <person name="Johnson C."/>
            <person name="Johnson D."/>
            <person name="Joy A."/>
            <person name="Kay M."/>
            <person name="Kershaw J.K."/>
            <person name="Kibukawa M."/>
            <person name="Kimberley A.M."/>
            <person name="King A."/>
            <person name="Knights A.J."/>
            <person name="Lad H."/>
            <person name="Laird G."/>
            <person name="Lawlor S."/>
            <person name="Leongamornlert D.A."/>
            <person name="Lloyd D.M."/>
            <person name="Loveland J."/>
            <person name="Lovell J."/>
            <person name="Lush M.J."/>
            <person name="Lyne R."/>
            <person name="Martin S."/>
            <person name="Mashreghi-Mohammadi M."/>
            <person name="Matthews L."/>
            <person name="Matthews N.S.W."/>
            <person name="McLaren S."/>
            <person name="Milne S."/>
            <person name="Mistry S."/>
            <person name="Moore M.J.F."/>
            <person name="Nickerson T."/>
            <person name="O'Dell C.N."/>
            <person name="Oliver K."/>
            <person name="Palmeiri A."/>
            <person name="Palmer S.A."/>
            <person name="Parker A."/>
            <person name="Patel D."/>
            <person name="Pearce A.V."/>
            <person name="Peck A.I."/>
            <person name="Pelan S."/>
            <person name="Phelps K."/>
            <person name="Phillimore B.J."/>
            <person name="Plumb R."/>
            <person name="Rajan J."/>
            <person name="Raymond C."/>
            <person name="Rouse G."/>
            <person name="Saenphimmachak C."/>
            <person name="Sehra H.K."/>
            <person name="Sheridan E."/>
            <person name="Shownkeen R."/>
            <person name="Sims S."/>
            <person name="Skuce C.D."/>
            <person name="Smith M."/>
            <person name="Steward C."/>
            <person name="Subramanian S."/>
            <person name="Sycamore N."/>
            <person name="Tracey A."/>
            <person name="Tromans A."/>
            <person name="Van Helmond Z."/>
            <person name="Wall M."/>
            <person name="Wallis J.M."/>
            <person name="White S."/>
            <person name="Whitehead S.L."/>
            <person name="Wilkinson J.E."/>
            <person name="Willey D.L."/>
            <person name="Williams H."/>
            <person name="Wilming L."/>
            <person name="Wray P.W."/>
            <person name="Wu Z."/>
            <person name="Coulson A."/>
            <person name="Vaudin M."/>
            <person name="Sulston J.E."/>
            <person name="Durbin R.M."/>
            <person name="Hubbard T."/>
            <person name="Wooster R."/>
            <person name="Dunham I."/>
            <person name="Carter N.P."/>
            <person name="McVean G."/>
            <person name="Ross M.T."/>
            <person name="Harrow J."/>
            <person name="Olson M.V."/>
            <person name="Beck S."/>
            <person name="Rogers J."/>
            <person name="Bentley D.R."/>
        </authorList>
    </citation>
    <scope>NUCLEOTIDE SEQUENCE [LARGE SCALE GENOMIC DNA]</scope>
</reference>
<reference key="7">
    <citation type="submission" date="2005-07" db="EMBL/GenBank/DDBJ databases">
        <authorList>
            <person name="Mural R.J."/>
            <person name="Istrail S."/>
            <person name="Sutton G.G."/>
            <person name="Florea L."/>
            <person name="Halpern A.L."/>
            <person name="Mobarry C.M."/>
            <person name="Lippert R."/>
            <person name="Walenz B."/>
            <person name="Shatkay H."/>
            <person name="Dew I."/>
            <person name="Miller J.R."/>
            <person name="Flanigan M.J."/>
            <person name="Edwards N.J."/>
            <person name="Bolanos R."/>
            <person name="Fasulo D."/>
            <person name="Halldorsson B.V."/>
            <person name="Hannenhalli S."/>
            <person name="Turner R."/>
            <person name="Yooseph S."/>
            <person name="Lu F."/>
            <person name="Nusskern D.R."/>
            <person name="Shue B.C."/>
            <person name="Zheng X.H."/>
            <person name="Zhong F."/>
            <person name="Delcher A.L."/>
            <person name="Huson D.H."/>
            <person name="Kravitz S.A."/>
            <person name="Mouchard L."/>
            <person name="Reinert K."/>
            <person name="Remington K.A."/>
            <person name="Clark A.G."/>
            <person name="Waterman M.S."/>
            <person name="Eichler E.E."/>
            <person name="Adams M.D."/>
            <person name="Hunkapiller M.W."/>
            <person name="Myers E.W."/>
            <person name="Venter J.C."/>
        </authorList>
    </citation>
    <scope>NUCLEOTIDE SEQUENCE [LARGE SCALE GENOMIC DNA]</scope>
</reference>
<reference key="8">
    <citation type="journal article" date="2004" name="Genome Res.">
        <title>The status, quality, and expansion of the NIH full-length cDNA project: the Mammalian Gene Collection (MGC).</title>
        <authorList>
            <consortium name="The MGC Project Team"/>
        </authorList>
    </citation>
    <scope>NUCLEOTIDE SEQUENCE [LARGE SCALE MRNA] (ISOFORM DFF45)</scope>
    <source>
        <tissue>Eye</tissue>
        <tissue>Kidney</tissue>
        <tissue>Skeletal muscle</tissue>
    </source>
</reference>
<reference key="9">
    <citation type="submission" date="2010-01" db="UniProtKB">
        <authorList>
            <person name="Bienvenut W.V."/>
        </authorList>
    </citation>
    <scope>PROTEIN SEQUENCE OF 1-16; 171-182; 190-201; 214-246; 249-269 AND 297-307</scope>
    <scope>ACETYLATION AT MET-1</scope>
    <scope>IDENTIFICATION BY MASS SPECTROMETRY</scope>
    <source>
        <tissue>Ovarian carcinoma</tissue>
    </source>
</reference>
<reference key="10">
    <citation type="journal article" date="2006" name="Nat. Biotechnol.">
        <title>A probability-based approach for high-throughput protein phosphorylation analysis and site localization.</title>
        <authorList>
            <person name="Beausoleil S.A."/>
            <person name="Villen J."/>
            <person name="Gerber S.A."/>
            <person name="Rush J."/>
            <person name="Gygi S.P."/>
        </authorList>
    </citation>
    <scope>PHOSPHORYLATION [LARGE SCALE ANALYSIS] AT SER-315</scope>
    <scope>IDENTIFICATION BY MASS SPECTROMETRY [LARGE SCALE ANALYSIS]</scope>
    <source>
        <tissue>Cervix carcinoma</tissue>
    </source>
</reference>
<reference key="11">
    <citation type="journal article" date="2007" name="Science">
        <title>ATM and ATR substrate analysis reveals extensive protein networks responsive to DNA damage.</title>
        <authorList>
            <person name="Matsuoka S."/>
            <person name="Ballif B.A."/>
            <person name="Smogorzewska A."/>
            <person name="McDonald E.R. III"/>
            <person name="Hurov K.E."/>
            <person name="Luo J."/>
            <person name="Bakalarski C.E."/>
            <person name="Zhao Z."/>
            <person name="Solimini N."/>
            <person name="Lerenthal Y."/>
            <person name="Shiloh Y."/>
            <person name="Gygi S.P."/>
            <person name="Elledge S.J."/>
        </authorList>
    </citation>
    <scope>IDENTIFICATION BY MASS SPECTROMETRY [LARGE SCALE ANALYSIS]</scope>
    <source>
        <tissue>Embryonic kidney</tissue>
    </source>
</reference>
<reference key="12">
    <citation type="journal article" date="2008" name="Proc. Natl. Acad. Sci. U.S.A.">
        <title>A quantitative atlas of mitotic phosphorylation.</title>
        <authorList>
            <person name="Dephoure N."/>
            <person name="Zhou C."/>
            <person name="Villen J."/>
            <person name="Beausoleil S.A."/>
            <person name="Bakalarski C.E."/>
            <person name="Elledge S.J."/>
            <person name="Gygi S.P."/>
        </authorList>
    </citation>
    <scope>PHOSPHORYLATION [LARGE SCALE ANALYSIS] AT SER-315</scope>
    <scope>IDENTIFICATION BY MASS SPECTROMETRY [LARGE SCALE ANALYSIS]</scope>
    <source>
        <tissue>Cervix carcinoma</tissue>
    </source>
</reference>
<reference key="13">
    <citation type="journal article" date="2009" name="Anal. Chem.">
        <title>Lys-N and trypsin cover complementary parts of the phosphoproteome in a refined SCX-based approach.</title>
        <authorList>
            <person name="Gauci S."/>
            <person name="Helbig A.O."/>
            <person name="Slijper M."/>
            <person name="Krijgsveld J."/>
            <person name="Heck A.J."/>
            <person name="Mohammed S."/>
        </authorList>
    </citation>
    <scope>ACETYLATION [LARGE SCALE ANALYSIS] AT MET-1</scope>
    <scope>IDENTIFICATION BY MASS SPECTROMETRY [LARGE SCALE ANALYSIS]</scope>
</reference>
<reference key="14">
    <citation type="journal article" date="2010" name="Sci. Signal.">
        <title>Quantitative phosphoproteomics reveals widespread full phosphorylation site occupancy during mitosis.</title>
        <authorList>
            <person name="Olsen J.V."/>
            <person name="Vermeulen M."/>
            <person name="Santamaria A."/>
            <person name="Kumar C."/>
            <person name="Miller M.L."/>
            <person name="Jensen L.J."/>
            <person name="Gnad F."/>
            <person name="Cox J."/>
            <person name="Jensen T.S."/>
            <person name="Nigg E.A."/>
            <person name="Brunak S."/>
            <person name="Mann M."/>
        </authorList>
    </citation>
    <scope>PHOSPHORYLATION [LARGE SCALE ANALYSIS] AT SER-315</scope>
    <scope>IDENTIFICATION BY MASS SPECTROMETRY [LARGE SCALE ANALYSIS]</scope>
    <source>
        <tissue>Cervix carcinoma</tissue>
    </source>
</reference>
<reference key="15">
    <citation type="journal article" date="2011" name="BMC Syst. Biol.">
        <title>Initial characterization of the human central proteome.</title>
        <authorList>
            <person name="Burkard T.R."/>
            <person name="Planyavsky M."/>
            <person name="Kaupe I."/>
            <person name="Breitwieser F.P."/>
            <person name="Buerckstuemmer T."/>
            <person name="Bennett K.L."/>
            <person name="Superti-Furga G."/>
            <person name="Colinge J."/>
        </authorList>
    </citation>
    <scope>IDENTIFICATION BY MASS SPECTROMETRY [LARGE SCALE ANALYSIS]</scope>
</reference>
<reference key="16">
    <citation type="journal article" date="2011" name="Sci. Signal.">
        <title>System-wide temporal characterization of the proteome and phosphoproteome of human embryonic stem cell differentiation.</title>
        <authorList>
            <person name="Rigbolt K.T."/>
            <person name="Prokhorova T.A."/>
            <person name="Akimov V."/>
            <person name="Henningsen J."/>
            <person name="Johansen P.T."/>
            <person name="Kratchmarova I."/>
            <person name="Kassem M."/>
            <person name="Mann M."/>
            <person name="Olsen J.V."/>
            <person name="Blagoev B."/>
        </authorList>
    </citation>
    <scope>PHOSPHORYLATION [LARGE SCALE ANALYSIS] AT SER-315</scope>
    <scope>IDENTIFICATION BY MASS SPECTROMETRY [LARGE SCALE ANALYSIS]</scope>
</reference>
<reference key="17">
    <citation type="journal article" date="2012" name="Mol. Cell. Proteomics">
        <title>Comparative large-scale characterisation of plant vs. mammal proteins reveals similar and idiosyncratic N-alpha acetylation features.</title>
        <authorList>
            <person name="Bienvenut W.V."/>
            <person name="Sumpton D."/>
            <person name="Martinez A."/>
            <person name="Lilla S."/>
            <person name="Espagne C."/>
            <person name="Meinnel T."/>
            <person name="Giglione C."/>
        </authorList>
    </citation>
    <scope>ACETYLATION [LARGE SCALE ANALYSIS] AT MET-1</scope>
    <scope>IDENTIFICATION BY MASS SPECTROMETRY [LARGE SCALE ANALYSIS]</scope>
</reference>
<reference key="18">
    <citation type="journal article" date="2012" name="Proc. Natl. Acad. Sci. U.S.A.">
        <title>N-terminal acetylome analyses and functional insights of the N-terminal acetyltransferase NatB.</title>
        <authorList>
            <person name="Van Damme P."/>
            <person name="Lasa M."/>
            <person name="Polevoda B."/>
            <person name="Gazquez C."/>
            <person name="Elosegui-Artola A."/>
            <person name="Kim D.S."/>
            <person name="De Juan-Pardo E."/>
            <person name="Demeyer K."/>
            <person name="Hole K."/>
            <person name="Larrea E."/>
            <person name="Timmerman E."/>
            <person name="Prieto J."/>
            <person name="Arnesen T."/>
            <person name="Sherman F."/>
            <person name="Gevaert K."/>
            <person name="Aldabe R."/>
        </authorList>
    </citation>
    <scope>ACETYLATION [LARGE SCALE ANALYSIS] AT MET-1</scope>
    <scope>IDENTIFICATION BY MASS SPECTROMETRY [LARGE SCALE ANALYSIS]</scope>
</reference>
<reference key="19">
    <citation type="journal article" date="2013" name="J. Proteome Res.">
        <title>Toward a comprehensive characterization of a human cancer cell phosphoproteome.</title>
        <authorList>
            <person name="Zhou H."/>
            <person name="Di Palma S."/>
            <person name="Preisinger C."/>
            <person name="Peng M."/>
            <person name="Polat A.N."/>
            <person name="Heck A.J."/>
            <person name="Mohammed S."/>
        </authorList>
    </citation>
    <scope>PHOSPHORYLATION [LARGE SCALE ANALYSIS] AT THR-243 AND SER-315</scope>
    <scope>IDENTIFICATION BY MASS SPECTROMETRY [LARGE SCALE ANALYSIS]</scope>
    <source>
        <tissue>Cervix carcinoma</tissue>
        <tissue>Erythroleukemia</tissue>
    </source>
</reference>
<reference key="20">
    <citation type="journal article" date="2014" name="J. Proteomics">
        <title>An enzyme assisted RP-RPLC approach for in-depth analysis of human liver phosphoproteome.</title>
        <authorList>
            <person name="Bian Y."/>
            <person name="Song C."/>
            <person name="Cheng K."/>
            <person name="Dong M."/>
            <person name="Wang F."/>
            <person name="Huang J."/>
            <person name="Sun D."/>
            <person name="Wang L."/>
            <person name="Ye M."/>
            <person name="Zou H."/>
        </authorList>
    </citation>
    <scope>PHOSPHORYLATION [LARGE SCALE ANALYSIS] AT SER-315</scope>
    <scope>IDENTIFICATION BY MASS SPECTROMETRY [LARGE SCALE ANALYSIS]</scope>
    <source>
        <tissue>Liver</tissue>
    </source>
</reference>
<reference key="21">
    <citation type="journal article" date="2001" name="Proc. Natl. Acad. Sci. U.S.A.">
        <title>Solution structure of DFF40 and DFF45 N-terminal domain complex and mutual chaperone activity of DFF40 and DFF45.</title>
        <authorList>
            <person name="Zhou P."/>
            <person name="Lugovskoy A.A."/>
            <person name="McCarty J.S."/>
            <person name="Li P."/>
            <person name="Wagner G."/>
        </authorList>
    </citation>
    <scope>STRUCTURE BY NMR OF 11-100</scope>
    <scope>SUBUNIT</scope>
</reference>
<organism>
    <name type="scientific">Homo sapiens</name>
    <name type="common">Human</name>
    <dbReference type="NCBI Taxonomy" id="9606"/>
    <lineage>
        <taxon>Eukaryota</taxon>
        <taxon>Metazoa</taxon>
        <taxon>Chordata</taxon>
        <taxon>Craniata</taxon>
        <taxon>Vertebrata</taxon>
        <taxon>Euteleostomi</taxon>
        <taxon>Mammalia</taxon>
        <taxon>Eutheria</taxon>
        <taxon>Euarchontoglires</taxon>
        <taxon>Primates</taxon>
        <taxon>Haplorrhini</taxon>
        <taxon>Catarrhini</taxon>
        <taxon>Hominidae</taxon>
        <taxon>Homo</taxon>
    </lineage>
</organism>
<name>DFFA_HUMAN</name>